<comment type="function">
    <text evidence="1">Allows the formation of correctly charged Gln-tRNA(Gln) through the transamidation of misacylated Glu-tRNA(Gln) in organisms which lack glutaminyl-tRNA synthetase. The reaction takes place in the presence of glutamine and ATP through an activated gamma-phospho-Glu-tRNA(Gln).</text>
</comment>
<comment type="catalytic activity">
    <reaction evidence="1">
        <text>L-glutamyl-tRNA(Gln) + L-glutamine + ATP + H2O = L-glutaminyl-tRNA(Gln) + L-glutamate + ADP + phosphate + H(+)</text>
        <dbReference type="Rhea" id="RHEA:17521"/>
        <dbReference type="Rhea" id="RHEA-COMP:9681"/>
        <dbReference type="Rhea" id="RHEA-COMP:9684"/>
        <dbReference type="ChEBI" id="CHEBI:15377"/>
        <dbReference type="ChEBI" id="CHEBI:15378"/>
        <dbReference type="ChEBI" id="CHEBI:29985"/>
        <dbReference type="ChEBI" id="CHEBI:30616"/>
        <dbReference type="ChEBI" id="CHEBI:43474"/>
        <dbReference type="ChEBI" id="CHEBI:58359"/>
        <dbReference type="ChEBI" id="CHEBI:78520"/>
        <dbReference type="ChEBI" id="CHEBI:78521"/>
        <dbReference type="ChEBI" id="CHEBI:456216"/>
        <dbReference type="EC" id="6.3.5.7"/>
    </reaction>
</comment>
<comment type="subunit">
    <text evidence="1">Heterotrimer of A, B and C subunits.</text>
</comment>
<comment type="similarity">
    <text evidence="1">Belongs to the amidase family. GatA subfamily.</text>
</comment>
<accession>Q032T3</accession>
<reference key="1">
    <citation type="journal article" date="2006" name="Proc. Natl. Acad. Sci. U.S.A.">
        <title>Comparative genomics of the lactic acid bacteria.</title>
        <authorList>
            <person name="Makarova K.S."/>
            <person name="Slesarev A."/>
            <person name="Wolf Y.I."/>
            <person name="Sorokin A."/>
            <person name="Mirkin B."/>
            <person name="Koonin E.V."/>
            <person name="Pavlov A."/>
            <person name="Pavlova N."/>
            <person name="Karamychev V."/>
            <person name="Polouchine N."/>
            <person name="Shakhova V."/>
            <person name="Grigoriev I."/>
            <person name="Lou Y."/>
            <person name="Rohksar D."/>
            <person name="Lucas S."/>
            <person name="Huang K."/>
            <person name="Goodstein D.M."/>
            <person name="Hawkins T."/>
            <person name="Plengvidhya V."/>
            <person name="Welker D."/>
            <person name="Hughes J."/>
            <person name="Goh Y."/>
            <person name="Benson A."/>
            <person name="Baldwin K."/>
            <person name="Lee J.-H."/>
            <person name="Diaz-Muniz I."/>
            <person name="Dosti B."/>
            <person name="Smeianov V."/>
            <person name="Wechter W."/>
            <person name="Barabote R."/>
            <person name="Lorca G."/>
            <person name="Altermann E."/>
            <person name="Barrangou R."/>
            <person name="Ganesan B."/>
            <person name="Xie Y."/>
            <person name="Rawsthorne H."/>
            <person name="Tamir D."/>
            <person name="Parker C."/>
            <person name="Breidt F."/>
            <person name="Broadbent J.R."/>
            <person name="Hutkins R."/>
            <person name="O'Sullivan D."/>
            <person name="Steele J."/>
            <person name="Unlu G."/>
            <person name="Saier M.H. Jr."/>
            <person name="Klaenhammer T."/>
            <person name="Richardson P."/>
            <person name="Kozyavkin S."/>
            <person name="Weimer B.C."/>
            <person name="Mills D.A."/>
        </authorList>
    </citation>
    <scope>NUCLEOTIDE SEQUENCE [LARGE SCALE GENOMIC DNA]</scope>
    <source>
        <strain>SK11</strain>
    </source>
</reference>
<evidence type="ECO:0000255" key="1">
    <source>
        <dbReference type="HAMAP-Rule" id="MF_00120"/>
    </source>
</evidence>
<name>GATA_LACLS</name>
<proteinExistence type="inferred from homology"/>
<dbReference type="EC" id="6.3.5.7" evidence="1"/>
<dbReference type="EMBL" id="CP000425">
    <property type="protein sequence ID" value="ABJ71789.1"/>
    <property type="molecule type" value="Genomic_DNA"/>
</dbReference>
<dbReference type="RefSeq" id="WP_011675222.1">
    <property type="nucleotide sequence ID" value="NC_008527.1"/>
</dbReference>
<dbReference type="SMR" id="Q032T3"/>
<dbReference type="KEGG" id="llc:LACR_0170"/>
<dbReference type="HOGENOM" id="CLU_009600_0_3_9"/>
<dbReference type="Proteomes" id="UP000000240">
    <property type="component" value="Chromosome"/>
</dbReference>
<dbReference type="GO" id="GO:0030956">
    <property type="term" value="C:glutamyl-tRNA(Gln) amidotransferase complex"/>
    <property type="evidence" value="ECO:0007669"/>
    <property type="project" value="InterPro"/>
</dbReference>
<dbReference type="GO" id="GO:0005524">
    <property type="term" value="F:ATP binding"/>
    <property type="evidence" value="ECO:0007669"/>
    <property type="project" value="UniProtKB-KW"/>
</dbReference>
<dbReference type="GO" id="GO:0050567">
    <property type="term" value="F:glutaminyl-tRNA synthase (glutamine-hydrolyzing) activity"/>
    <property type="evidence" value="ECO:0007669"/>
    <property type="project" value="UniProtKB-UniRule"/>
</dbReference>
<dbReference type="GO" id="GO:0006412">
    <property type="term" value="P:translation"/>
    <property type="evidence" value="ECO:0007669"/>
    <property type="project" value="UniProtKB-UniRule"/>
</dbReference>
<dbReference type="Gene3D" id="3.90.1300.10">
    <property type="entry name" value="Amidase signature (AS) domain"/>
    <property type="match status" value="1"/>
</dbReference>
<dbReference type="HAMAP" id="MF_00120">
    <property type="entry name" value="GatA"/>
    <property type="match status" value="1"/>
</dbReference>
<dbReference type="InterPro" id="IPR000120">
    <property type="entry name" value="Amidase"/>
</dbReference>
<dbReference type="InterPro" id="IPR020556">
    <property type="entry name" value="Amidase_CS"/>
</dbReference>
<dbReference type="InterPro" id="IPR023631">
    <property type="entry name" value="Amidase_dom"/>
</dbReference>
<dbReference type="InterPro" id="IPR036928">
    <property type="entry name" value="AS_sf"/>
</dbReference>
<dbReference type="InterPro" id="IPR004412">
    <property type="entry name" value="GatA"/>
</dbReference>
<dbReference type="NCBIfam" id="TIGR00132">
    <property type="entry name" value="gatA"/>
    <property type="match status" value="1"/>
</dbReference>
<dbReference type="PANTHER" id="PTHR11895:SF151">
    <property type="entry name" value="GLUTAMYL-TRNA(GLN) AMIDOTRANSFERASE SUBUNIT A"/>
    <property type="match status" value="1"/>
</dbReference>
<dbReference type="PANTHER" id="PTHR11895">
    <property type="entry name" value="TRANSAMIDASE"/>
    <property type="match status" value="1"/>
</dbReference>
<dbReference type="Pfam" id="PF01425">
    <property type="entry name" value="Amidase"/>
    <property type="match status" value="1"/>
</dbReference>
<dbReference type="SUPFAM" id="SSF75304">
    <property type="entry name" value="Amidase signature (AS) enzymes"/>
    <property type="match status" value="1"/>
</dbReference>
<dbReference type="PROSITE" id="PS00571">
    <property type="entry name" value="AMIDASES"/>
    <property type="match status" value="1"/>
</dbReference>
<sequence length="486" mass="52160">MSYNNKSIKELHELLVNKEISALELTKATLSDIQAREPQIDAFLKVTEEKALKEAAAIDARGINPDVVTDGISIGVKDNIVTEGIETTAASKILGGWIPPYNATVANKLSQSGLITIGKLNMDEFAMGGSGENSSIKPTKNVWDQTKVPGGSSSGSAASVASGEVRLSLGSDTGGSIRQPAAFNGIVGLKPTYGRVSRFGLIAFASSLDQIGPLTPTVEENAQLLNVISGFDKNDSTSSNVSVPDFTSKIGQDIKGMKIALPKEYFGEGIDEKVKEQILAAAKHLEKLGAIVEEVSLPHSKYGVAVYYIIASSEASSNLQRFDGIRYGYRAQDIKNLEDLYVKSRSEGFGPEVQRRIMLGTFSLSAGSYDKHFKKAGQVRTLIINDFAKVFEKYDLILGPTTPTAAWDLGARVDDPISMYLADLLTIPVNLAGLPGISIPAGFADGLPVGMQLIGKRYDEETIYQVAAAFEATTDFHKKQPIIFGK</sequence>
<gene>
    <name evidence="1" type="primary">gatA</name>
    <name type="ordered locus">LACR_0170</name>
</gene>
<keyword id="KW-0067">ATP-binding</keyword>
<keyword id="KW-0436">Ligase</keyword>
<keyword id="KW-0547">Nucleotide-binding</keyword>
<keyword id="KW-0648">Protein biosynthesis</keyword>
<feature type="chain" id="PRO_1000015849" description="Glutamyl-tRNA(Gln) amidotransferase subunit A">
    <location>
        <begin position="1"/>
        <end position="486"/>
    </location>
</feature>
<feature type="active site" description="Charge relay system" evidence="1">
    <location>
        <position position="77"/>
    </location>
</feature>
<feature type="active site" description="Charge relay system" evidence="1">
    <location>
        <position position="152"/>
    </location>
</feature>
<feature type="active site" description="Acyl-ester intermediate" evidence="1">
    <location>
        <position position="176"/>
    </location>
</feature>
<organism>
    <name type="scientific">Lactococcus lactis subsp. cremoris (strain SK11)</name>
    <dbReference type="NCBI Taxonomy" id="272622"/>
    <lineage>
        <taxon>Bacteria</taxon>
        <taxon>Bacillati</taxon>
        <taxon>Bacillota</taxon>
        <taxon>Bacilli</taxon>
        <taxon>Lactobacillales</taxon>
        <taxon>Streptococcaceae</taxon>
        <taxon>Lactococcus</taxon>
        <taxon>Lactococcus cremoris subsp. cremoris</taxon>
    </lineage>
</organism>
<protein>
    <recommendedName>
        <fullName evidence="1">Glutamyl-tRNA(Gln) amidotransferase subunit A</fullName>
        <shortName evidence="1">Glu-ADT subunit A</shortName>
        <ecNumber evidence="1">6.3.5.7</ecNumber>
    </recommendedName>
</protein>